<organism>
    <name type="scientific">Mus musculus</name>
    <name type="common">Mouse</name>
    <dbReference type="NCBI Taxonomy" id="10090"/>
    <lineage>
        <taxon>Eukaryota</taxon>
        <taxon>Metazoa</taxon>
        <taxon>Chordata</taxon>
        <taxon>Craniata</taxon>
        <taxon>Vertebrata</taxon>
        <taxon>Euteleostomi</taxon>
        <taxon>Mammalia</taxon>
        <taxon>Eutheria</taxon>
        <taxon>Euarchontoglires</taxon>
        <taxon>Glires</taxon>
        <taxon>Rodentia</taxon>
        <taxon>Myomorpha</taxon>
        <taxon>Muroidea</taxon>
        <taxon>Muridae</taxon>
        <taxon>Murinae</taxon>
        <taxon>Mus</taxon>
        <taxon>Mus</taxon>
    </lineage>
</organism>
<proteinExistence type="evidence at protein level"/>
<feature type="chain" id="PRO_0000235689" description="Integrator complex subunit 10">
    <location>
        <begin position="1"/>
        <end position="710"/>
    </location>
</feature>
<feature type="modified residue" description="Phosphoserine" evidence="1">
    <location>
        <position position="231"/>
    </location>
</feature>
<feature type="modified residue" description="Phosphoserine" evidence="3">
    <location>
        <position position="381"/>
    </location>
</feature>
<feature type="modified residue" description="Phosphoserine" evidence="3">
    <location>
        <position position="382"/>
    </location>
</feature>
<feature type="cross-link" description="Glycyl lysine isopeptide (Lys-Gly) (interchain with G-Cter in SUMO2)" evidence="1">
    <location>
        <position position="464"/>
    </location>
</feature>
<feature type="sequence conflict" description="In Ref. 2; AAH31923." evidence="2" ref="2">
    <original>N</original>
    <variation>T</variation>
    <location>
        <position position="304"/>
    </location>
</feature>
<feature type="sequence conflict" description="In Ref. 2; AAH31923." evidence="2" ref="2">
    <original>I</original>
    <variation>V</variation>
    <location>
        <position position="346"/>
    </location>
</feature>
<feature type="sequence conflict" description="In Ref. 1; BAC28731." evidence="2" ref="1">
    <original>K</original>
    <variation>KPSSPPMGLLQQEFLPVLQPSIQTADR</variation>
    <location>
        <position position="659"/>
    </location>
</feature>
<comment type="function">
    <text evidence="1">Component of the integrator complex, a multiprotein complex that terminates RNA polymerase II (Pol II) transcription in the promoter-proximal region of genes. The integrator complex provides a quality checkpoint during transcription elongation by driving premature transcription termination of transcripts that are unfavorably configured for transcriptional elongation: the complex terminates transcription by (1) catalyzing dephosphorylation of the C-terminal domain (CTD) of Pol II subunit POLR2A/RPB1 and SUPT5H/SPT5, (2) degrading the exiting nascent RNA transcript via endonuclease activity and (3) promoting the release of Pol II from bound DNA. The integrator complex is also involved in terminating the synthesis of non-coding Pol II transcripts, such as enhancer RNAs (eRNAs), small nuclear RNAs (snRNAs), telomerase RNAs and long non-coding RNAs (lncRNAs). Within the integrator complex, INTS10 is part of the integrator tail module that acts as a platform for the recruitment of transcription factors at promoters. May be not involved in the recruitment of cytoplasmic dynein to the nuclear envelope, probably as component of the integrator complex.</text>
</comment>
<comment type="subunit">
    <text evidence="1">Component of the Integrator complex, composed of core subunits INTS1, INTS2, INTS3, INTS4, INTS5, INTS6, INTS7, INTS8, INTS9/RC74, INTS10, INTS11/CPSF3L, INTS12, INTS13, INTS14 and INTS15. The core complex associates with protein phosphatase 2A subunits PPP2CA and PPP2R1A, to form the Integrator-PP2A (INTAC) complex. INTS10 is part of the tail subcomplex, composed of INTS10, INTS13, INTS14 and INTS15.</text>
</comment>
<comment type="subcellular location">
    <subcellularLocation>
        <location evidence="1">Nucleus</location>
    </subcellularLocation>
</comment>
<comment type="similarity">
    <text evidence="2">Belongs to the Integrator subunit 10 family.</text>
</comment>
<comment type="sequence caution" evidence="2">
    <conflict type="erroneous initiation">
        <sequence resource="EMBL-CDS" id="BAC30632"/>
    </conflict>
    <text>Truncated N-terminus.</text>
</comment>
<name>INT10_MOUSE</name>
<reference key="1">
    <citation type="journal article" date="2005" name="Science">
        <title>The transcriptional landscape of the mammalian genome.</title>
        <authorList>
            <person name="Carninci P."/>
            <person name="Kasukawa T."/>
            <person name="Katayama S."/>
            <person name="Gough J."/>
            <person name="Frith M.C."/>
            <person name="Maeda N."/>
            <person name="Oyama R."/>
            <person name="Ravasi T."/>
            <person name="Lenhard B."/>
            <person name="Wells C."/>
            <person name="Kodzius R."/>
            <person name="Shimokawa K."/>
            <person name="Bajic V.B."/>
            <person name="Brenner S.E."/>
            <person name="Batalov S."/>
            <person name="Forrest A.R."/>
            <person name="Zavolan M."/>
            <person name="Davis M.J."/>
            <person name="Wilming L.G."/>
            <person name="Aidinis V."/>
            <person name="Allen J.E."/>
            <person name="Ambesi-Impiombato A."/>
            <person name="Apweiler R."/>
            <person name="Aturaliya R.N."/>
            <person name="Bailey T.L."/>
            <person name="Bansal M."/>
            <person name="Baxter L."/>
            <person name="Beisel K.W."/>
            <person name="Bersano T."/>
            <person name="Bono H."/>
            <person name="Chalk A.M."/>
            <person name="Chiu K.P."/>
            <person name="Choudhary V."/>
            <person name="Christoffels A."/>
            <person name="Clutterbuck D.R."/>
            <person name="Crowe M.L."/>
            <person name="Dalla E."/>
            <person name="Dalrymple B.P."/>
            <person name="de Bono B."/>
            <person name="Della Gatta G."/>
            <person name="di Bernardo D."/>
            <person name="Down T."/>
            <person name="Engstrom P."/>
            <person name="Fagiolini M."/>
            <person name="Faulkner G."/>
            <person name="Fletcher C.F."/>
            <person name="Fukushima T."/>
            <person name="Furuno M."/>
            <person name="Futaki S."/>
            <person name="Gariboldi M."/>
            <person name="Georgii-Hemming P."/>
            <person name="Gingeras T.R."/>
            <person name="Gojobori T."/>
            <person name="Green R.E."/>
            <person name="Gustincich S."/>
            <person name="Harbers M."/>
            <person name="Hayashi Y."/>
            <person name="Hensch T.K."/>
            <person name="Hirokawa N."/>
            <person name="Hill D."/>
            <person name="Huminiecki L."/>
            <person name="Iacono M."/>
            <person name="Ikeo K."/>
            <person name="Iwama A."/>
            <person name="Ishikawa T."/>
            <person name="Jakt M."/>
            <person name="Kanapin A."/>
            <person name="Katoh M."/>
            <person name="Kawasawa Y."/>
            <person name="Kelso J."/>
            <person name="Kitamura H."/>
            <person name="Kitano H."/>
            <person name="Kollias G."/>
            <person name="Krishnan S.P."/>
            <person name="Kruger A."/>
            <person name="Kummerfeld S.K."/>
            <person name="Kurochkin I.V."/>
            <person name="Lareau L.F."/>
            <person name="Lazarevic D."/>
            <person name="Lipovich L."/>
            <person name="Liu J."/>
            <person name="Liuni S."/>
            <person name="McWilliam S."/>
            <person name="Madan Babu M."/>
            <person name="Madera M."/>
            <person name="Marchionni L."/>
            <person name="Matsuda H."/>
            <person name="Matsuzawa S."/>
            <person name="Miki H."/>
            <person name="Mignone F."/>
            <person name="Miyake S."/>
            <person name="Morris K."/>
            <person name="Mottagui-Tabar S."/>
            <person name="Mulder N."/>
            <person name="Nakano N."/>
            <person name="Nakauchi H."/>
            <person name="Ng P."/>
            <person name="Nilsson R."/>
            <person name="Nishiguchi S."/>
            <person name="Nishikawa S."/>
            <person name="Nori F."/>
            <person name="Ohara O."/>
            <person name="Okazaki Y."/>
            <person name="Orlando V."/>
            <person name="Pang K.C."/>
            <person name="Pavan W.J."/>
            <person name="Pavesi G."/>
            <person name="Pesole G."/>
            <person name="Petrovsky N."/>
            <person name="Piazza S."/>
            <person name="Reed J."/>
            <person name="Reid J.F."/>
            <person name="Ring B.Z."/>
            <person name="Ringwald M."/>
            <person name="Rost B."/>
            <person name="Ruan Y."/>
            <person name="Salzberg S.L."/>
            <person name="Sandelin A."/>
            <person name="Schneider C."/>
            <person name="Schoenbach C."/>
            <person name="Sekiguchi K."/>
            <person name="Semple C.A."/>
            <person name="Seno S."/>
            <person name="Sessa L."/>
            <person name="Sheng Y."/>
            <person name="Shibata Y."/>
            <person name="Shimada H."/>
            <person name="Shimada K."/>
            <person name="Silva D."/>
            <person name="Sinclair B."/>
            <person name="Sperling S."/>
            <person name="Stupka E."/>
            <person name="Sugiura K."/>
            <person name="Sultana R."/>
            <person name="Takenaka Y."/>
            <person name="Taki K."/>
            <person name="Tammoja K."/>
            <person name="Tan S.L."/>
            <person name="Tang S."/>
            <person name="Taylor M.S."/>
            <person name="Tegner J."/>
            <person name="Teichmann S.A."/>
            <person name="Ueda H.R."/>
            <person name="van Nimwegen E."/>
            <person name="Verardo R."/>
            <person name="Wei C.L."/>
            <person name="Yagi K."/>
            <person name="Yamanishi H."/>
            <person name="Zabarovsky E."/>
            <person name="Zhu S."/>
            <person name="Zimmer A."/>
            <person name="Hide W."/>
            <person name="Bult C."/>
            <person name="Grimmond S.M."/>
            <person name="Teasdale R.D."/>
            <person name="Liu E.T."/>
            <person name="Brusic V."/>
            <person name="Quackenbush J."/>
            <person name="Wahlestedt C."/>
            <person name="Mattick J.S."/>
            <person name="Hume D.A."/>
            <person name="Kai C."/>
            <person name="Sasaki D."/>
            <person name="Tomaru Y."/>
            <person name="Fukuda S."/>
            <person name="Kanamori-Katayama M."/>
            <person name="Suzuki M."/>
            <person name="Aoki J."/>
            <person name="Arakawa T."/>
            <person name="Iida J."/>
            <person name="Imamura K."/>
            <person name="Itoh M."/>
            <person name="Kato T."/>
            <person name="Kawaji H."/>
            <person name="Kawagashira N."/>
            <person name="Kawashima T."/>
            <person name="Kojima M."/>
            <person name="Kondo S."/>
            <person name="Konno H."/>
            <person name="Nakano K."/>
            <person name="Ninomiya N."/>
            <person name="Nishio T."/>
            <person name="Okada M."/>
            <person name="Plessy C."/>
            <person name="Shibata K."/>
            <person name="Shiraki T."/>
            <person name="Suzuki S."/>
            <person name="Tagami M."/>
            <person name="Waki K."/>
            <person name="Watahiki A."/>
            <person name="Okamura-Oho Y."/>
            <person name="Suzuki H."/>
            <person name="Kawai J."/>
            <person name="Hayashizaki Y."/>
        </authorList>
    </citation>
    <scope>NUCLEOTIDE SEQUENCE [LARGE SCALE MRNA]</scope>
    <source>
        <strain>C57BL/6J</strain>
        <tissue>Diencephalon</tissue>
        <tissue>Testis</tissue>
        <tissue>Thymus</tissue>
    </source>
</reference>
<reference key="2">
    <citation type="journal article" date="2004" name="Genome Res.">
        <title>The status, quality, and expansion of the NIH full-length cDNA project: the Mammalian Gene Collection (MGC).</title>
        <authorList>
            <consortium name="The MGC Project Team"/>
        </authorList>
    </citation>
    <scope>NUCLEOTIDE SEQUENCE [LARGE SCALE MRNA]</scope>
    <source>
        <strain>FVB/N</strain>
        <tissue>Mammary tumor</tissue>
    </source>
</reference>
<reference key="3">
    <citation type="submission" date="2009-01" db="UniProtKB">
        <authorList>
            <person name="Lubec G."/>
            <person name="Sunyer B."/>
            <person name="Chen W.-Q."/>
        </authorList>
    </citation>
    <scope>PROTEIN SEQUENCE OF 294-307</scope>
    <scope>IDENTIFICATION BY MASS SPECTROMETRY</scope>
    <source>
        <strain>OF1</strain>
        <tissue>Hippocampus</tissue>
    </source>
</reference>
<reference key="4">
    <citation type="journal article" date="2010" name="Cell">
        <title>A tissue-specific atlas of mouse protein phosphorylation and expression.</title>
        <authorList>
            <person name="Huttlin E.L."/>
            <person name="Jedrychowski M.P."/>
            <person name="Elias J.E."/>
            <person name="Goswami T."/>
            <person name="Rad R."/>
            <person name="Beausoleil S.A."/>
            <person name="Villen J."/>
            <person name="Haas W."/>
            <person name="Sowa M.E."/>
            <person name="Gygi S.P."/>
        </authorList>
    </citation>
    <scope>PHOSPHORYLATION [LARGE SCALE ANALYSIS] AT SER-381 AND SER-382</scope>
    <scope>IDENTIFICATION BY MASS SPECTROMETRY [LARGE SCALE ANALYSIS]</scope>
    <source>
        <tissue>Brain</tissue>
        <tissue>Lung</tissue>
        <tissue>Spleen</tissue>
        <tissue>Testis</tissue>
    </source>
</reference>
<keyword id="KW-0903">Direct protein sequencing</keyword>
<keyword id="KW-1017">Isopeptide bond</keyword>
<keyword id="KW-0539">Nucleus</keyword>
<keyword id="KW-0597">Phosphoprotein</keyword>
<keyword id="KW-1185">Reference proteome</keyword>
<keyword id="KW-0832">Ubl conjugation</keyword>
<dbReference type="EMBL" id="AK034498">
    <property type="protein sequence ID" value="BAC28731.1"/>
    <property type="molecule type" value="mRNA"/>
</dbReference>
<dbReference type="EMBL" id="AK014939">
    <property type="protein sequence ID" value="BAB29629.2"/>
    <property type="molecule type" value="mRNA"/>
</dbReference>
<dbReference type="EMBL" id="AK040574">
    <property type="protein sequence ID" value="BAC30632.1"/>
    <property type="status" value="ALT_INIT"/>
    <property type="molecule type" value="mRNA"/>
</dbReference>
<dbReference type="EMBL" id="BC031923">
    <property type="protein sequence ID" value="AAH31923.2"/>
    <property type="molecule type" value="mRNA"/>
</dbReference>
<dbReference type="CCDS" id="CCDS22342.1"/>
<dbReference type="RefSeq" id="NP_001280720.1">
    <property type="nucleotide sequence ID" value="NM_001293791.1"/>
</dbReference>
<dbReference type="RefSeq" id="NP_001280721.1">
    <property type="nucleotide sequence ID" value="NM_001293792.1"/>
</dbReference>
<dbReference type="RefSeq" id="NP_081866.1">
    <property type="nucleotide sequence ID" value="NM_027590.5"/>
</dbReference>
<dbReference type="SMR" id="Q8K2A7"/>
<dbReference type="BioGRID" id="214319">
    <property type="interactions" value="14"/>
</dbReference>
<dbReference type="FunCoup" id="Q8K2A7">
    <property type="interactions" value="4189"/>
</dbReference>
<dbReference type="STRING" id="10090.ENSMUSP00000105871"/>
<dbReference type="GlyGen" id="Q8K2A7">
    <property type="glycosylation" value="1 site"/>
</dbReference>
<dbReference type="iPTMnet" id="Q8K2A7"/>
<dbReference type="PhosphoSitePlus" id="Q8K2A7"/>
<dbReference type="PaxDb" id="10090-ENSMUSP00000034328"/>
<dbReference type="PeptideAtlas" id="Q8K2A7"/>
<dbReference type="ProteomicsDB" id="267144"/>
<dbReference type="Pumba" id="Q8K2A7"/>
<dbReference type="Antibodypedia" id="41921">
    <property type="antibodies" value="210 antibodies from 27 providers"/>
</dbReference>
<dbReference type="DNASU" id="70885"/>
<dbReference type="Ensembl" id="ENSMUST00000034328.13">
    <property type="protein sequence ID" value="ENSMUSP00000034328.7"/>
    <property type="gene ID" value="ENSMUSG00000031864.17"/>
</dbReference>
<dbReference type="GeneID" id="70885"/>
<dbReference type="KEGG" id="mmu:70885"/>
<dbReference type="UCSC" id="uc009lwl.2">
    <property type="organism name" value="mouse"/>
</dbReference>
<dbReference type="AGR" id="MGI:1918135"/>
<dbReference type="CTD" id="55174"/>
<dbReference type="MGI" id="MGI:1918135">
    <property type="gene designation" value="Ints10"/>
</dbReference>
<dbReference type="VEuPathDB" id="HostDB:ENSMUSG00000031864"/>
<dbReference type="eggNOG" id="ENOG502QQ28">
    <property type="taxonomic scope" value="Eukaryota"/>
</dbReference>
<dbReference type="GeneTree" id="ENSGT00390000010950"/>
<dbReference type="HOGENOM" id="CLU_023740_0_0_1"/>
<dbReference type="InParanoid" id="Q8K2A7"/>
<dbReference type="OrthoDB" id="18145at2759"/>
<dbReference type="PhylomeDB" id="Q8K2A7"/>
<dbReference type="TreeFam" id="TF323935"/>
<dbReference type="Reactome" id="R-MMU-6807505">
    <property type="pathway name" value="RNA polymerase II transcribes snRNA genes"/>
</dbReference>
<dbReference type="BioGRID-ORCS" id="70885">
    <property type="hits" value="19 hits in 79 CRISPR screens"/>
</dbReference>
<dbReference type="ChiTaRS" id="Ints10">
    <property type="organism name" value="mouse"/>
</dbReference>
<dbReference type="PRO" id="PR:Q8K2A7"/>
<dbReference type="Proteomes" id="UP000000589">
    <property type="component" value="Chromosome 8"/>
</dbReference>
<dbReference type="RNAct" id="Q8K2A7">
    <property type="molecule type" value="protein"/>
</dbReference>
<dbReference type="Bgee" id="ENSMUSG00000031864">
    <property type="expression patterns" value="Expressed in spermatid and 248 other cell types or tissues"/>
</dbReference>
<dbReference type="ExpressionAtlas" id="Q8K2A7">
    <property type="expression patterns" value="baseline and differential"/>
</dbReference>
<dbReference type="GO" id="GO:0160232">
    <property type="term" value="C:INTAC complex"/>
    <property type="evidence" value="ECO:0000250"/>
    <property type="project" value="UniProtKB"/>
</dbReference>
<dbReference type="GO" id="GO:0032039">
    <property type="term" value="C:integrator complex"/>
    <property type="evidence" value="ECO:0007669"/>
    <property type="project" value="InterPro"/>
</dbReference>
<dbReference type="GO" id="GO:0005634">
    <property type="term" value="C:nucleus"/>
    <property type="evidence" value="ECO:0000250"/>
    <property type="project" value="UniProtKB"/>
</dbReference>
<dbReference type="GO" id="GO:0160240">
    <property type="term" value="P:RNA polymerase II transcription initiation surveillance"/>
    <property type="evidence" value="ECO:0000250"/>
    <property type="project" value="UniProtKB"/>
</dbReference>
<dbReference type="GO" id="GO:0016180">
    <property type="term" value="P:snRNA processing"/>
    <property type="evidence" value="ECO:0007669"/>
    <property type="project" value="InterPro"/>
</dbReference>
<dbReference type="InterPro" id="IPR026164">
    <property type="entry name" value="Int_cplx_su10"/>
</dbReference>
<dbReference type="PANTHER" id="PTHR16055">
    <property type="entry name" value="INTEGRATOR COMPLEX SUBUNIT 10"/>
    <property type="match status" value="1"/>
</dbReference>
<dbReference type="PANTHER" id="PTHR16055:SF2">
    <property type="entry name" value="INTEGRATOR COMPLEX SUBUNIT 10"/>
    <property type="match status" value="1"/>
</dbReference>
<dbReference type="Pfam" id="PF21045">
    <property type="entry name" value="INT10"/>
    <property type="match status" value="1"/>
</dbReference>
<dbReference type="PRINTS" id="PR02106">
    <property type="entry name" value="INTSUBUNIT10"/>
</dbReference>
<accession>Q8K2A7</accession>
<accession>Q8BYC2</accession>
<accession>Q8BZI9</accession>
<accession>Q9D5U1</accession>
<sequence length="710" mass="82020">MSAQGDCEFLVQRARELVPQDLWAAKAWLITARSLYPADFNIQYEMYTIERNAERTATAGRLLYDMFVNFPDQPVVWREISIITSALRNDSQDKQTQFLRSLFETLPGRVQCEMLLKVTEQCFNTLERSEMLLLLLRRFPETVVQHGVGLGEALLEAETIEEQDSPVNCFRKLFVCDVLPLIINNHDVRLPANLLYKYLNKAAEFYINYVTRSTQSENQHQGAQDTSDLMSPSKRSSQKYIIEGLTEKSSHIVDPWERLFKILNVVGMRCEWQMDKGRRSCSDLLHRMKELCRYMNSFDSEAHNNYKNQVLYSTMLVFFKSAFQYVSSIQPSLFQGPNAPSQVPLILLEDVANVYGDVEIDRSKHIHKKRKLAEGREKTMSSDDEECSAKGRNRHIVVSKADLSNSIEVLESFKLARESWELLYSLEFLDKEFTRICLAWKTDTWLWLRIFLTDMIIYQGQYKKAIASLHHLAALQGSLSQPQITGQGTLEHQRALIQLATCHFALGEYRMTCEKVLDLMCYMVLPIQDGGKPQEEPSKVKPKCRKGLDLKLLPCTSKAIMPYCLHLMLACFKLRAFTDSRDDMALGHVIVLLQQEWPRGENLFLKAISKICQQGNFQYENFFSYVTNIDMLEEFAYLRTQEGGKIHLELLPNQGMLIKHHTVTRGITKGVKEDFRLAMERQVSRCGENLMAVLHRFCINEKILLLQTLT</sequence>
<protein>
    <recommendedName>
        <fullName>Integrator complex subunit 10</fullName>
        <shortName>Int10</shortName>
    </recommendedName>
</protein>
<gene>
    <name type="primary">Ints10</name>
</gene>
<evidence type="ECO:0000250" key="1">
    <source>
        <dbReference type="UniProtKB" id="Q9NVR2"/>
    </source>
</evidence>
<evidence type="ECO:0000305" key="2"/>
<evidence type="ECO:0007744" key="3">
    <source>
    </source>
</evidence>